<comment type="function">
    <text evidence="1">ATP-binding (A) component of a common energy-coupling factor (ECF) ABC-transporter complex. Unlike classic ABC transporters this ECF transporter provides the energy necessary to transport a number of different substrates.</text>
</comment>
<comment type="subunit">
    <text evidence="1">Forms a stable energy-coupling factor (ECF) transporter complex composed of 2 membrane-embedded substrate-binding proteins (S component), 2 ATP-binding proteins (A component) and 2 transmembrane proteins (T component).</text>
</comment>
<comment type="subcellular location">
    <subcellularLocation>
        <location evidence="1">Cell membrane</location>
        <topology evidence="1">Peripheral membrane protein</topology>
    </subcellularLocation>
</comment>
<comment type="similarity">
    <text evidence="1">Belongs to the ABC transporter superfamily. Energy-coupling factor EcfA family.</text>
</comment>
<dbReference type="EC" id="7.-.-.-" evidence="1"/>
<dbReference type="EMBL" id="CP000562">
    <property type="protein sequence ID" value="ABN57333.1"/>
    <property type="molecule type" value="Genomic_DNA"/>
</dbReference>
<dbReference type="RefSeq" id="WP_011844244.1">
    <property type="nucleotide sequence ID" value="NC_009051.1"/>
</dbReference>
<dbReference type="SMR" id="A3CVD3"/>
<dbReference type="STRING" id="368407.Memar_1404"/>
<dbReference type="GeneID" id="4847303"/>
<dbReference type="KEGG" id="mem:Memar_1404"/>
<dbReference type="eggNOG" id="arCOG00202">
    <property type="taxonomic scope" value="Archaea"/>
</dbReference>
<dbReference type="HOGENOM" id="CLU_000604_1_22_2"/>
<dbReference type="OrthoDB" id="18209at2157"/>
<dbReference type="Proteomes" id="UP000002146">
    <property type="component" value="Chromosome"/>
</dbReference>
<dbReference type="GO" id="GO:0043190">
    <property type="term" value="C:ATP-binding cassette (ABC) transporter complex"/>
    <property type="evidence" value="ECO:0007669"/>
    <property type="project" value="TreeGrafter"/>
</dbReference>
<dbReference type="GO" id="GO:0005524">
    <property type="term" value="F:ATP binding"/>
    <property type="evidence" value="ECO:0007669"/>
    <property type="project" value="UniProtKB-KW"/>
</dbReference>
<dbReference type="GO" id="GO:0016887">
    <property type="term" value="F:ATP hydrolysis activity"/>
    <property type="evidence" value="ECO:0007669"/>
    <property type="project" value="InterPro"/>
</dbReference>
<dbReference type="GO" id="GO:0042626">
    <property type="term" value="F:ATPase-coupled transmembrane transporter activity"/>
    <property type="evidence" value="ECO:0007669"/>
    <property type="project" value="TreeGrafter"/>
</dbReference>
<dbReference type="GO" id="GO:0006824">
    <property type="term" value="P:cobalt ion transport"/>
    <property type="evidence" value="ECO:0007669"/>
    <property type="project" value="InterPro"/>
</dbReference>
<dbReference type="CDD" id="cd03225">
    <property type="entry name" value="ABC_cobalt_CbiO_domain1"/>
    <property type="match status" value="1"/>
</dbReference>
<dbReference type="FunFam" id="3.40.50.300:FF:000224">
    <property type="entry name" value="Energy-coupling factor transporter ATP-binding protein EcfA"/>
    <property type="match status" value="1"/>
</dbReference>
<dbReference type="Gene3D" id="3.40.50.300">
    <property type="entry name" value="P-loop containing nucleotide triphosphate hydrolases"/>
    <property type="match status" value="1"/>
</dbReference>
<dbReference type="InterPro" id="IPR003593">
    <property type="entry name" value="AAA+_ATPase"/>
</dbReference>
<dbReference type="InterPro" id="IPR003439">
    <property type="entry name" value="ABC_transporter-like_ATP-bd"/>
</dbReference>
<dbReference type="InterPro" id="IPR017871">
    <property type="entry name" value="ABC_transporter-like_CS"/>
</dbReference>
<dbReference type="InterPro" id="IPR015856">
    <property type="entry name" value="ABC_transpr_CbiO/EcfA_su"/>
</dbReference>
<dbReference type="InterPro" id="IPR005876">
    <property type="entry name" value="Co_trans_ATP-bd"/>
</dbReference>
<dbReference type="InterPro" id="IPR050095">
    <property type="entry name" value="ECF_ABC_transporter_ATP-bd"/>
</dbReference>
<dbReference type="InterPro" id="IPR027417">
    <property type="entry name" value="P-loop_NTPase"/>
</dbReference>
<dbReference type="NCBIfam" id="TIGR01166">
    <property type="entry name" value="cbiO"/>
    <property type="match status" value="1"/>
</dbReference>
<dbReference type="NCBIfam" id="NF010171">
    <property type="entry name" value="PRK13652.1"/>
    <property type="match status" value="1"/>
</dbReference>
<dbReference type="PANTHER" id="PTHR43553:SF24">
    <property type="entry name" value="ENERGY-COUPLING FACTOR TRANSPORTER ATP-BINDING PROTEIN ECFA1"/>
    <property type="match status" value="1"/>
</dbReference>
<dbReference type="PANTHER" id="PTHR43553">
    <property type="entry name" value="HEAVY METAL TRANSPORTER"/>
    <property type="match status" value="1"/>
</dbReference>
<dbReference type="Pfam" id="PF00005">
    <property type="entry name" value="ABC_tran"/>
    <property type="match status" value="1"/>
</dbReference>
<dbReference type="SMART" id="SM00382">
    <property type="entry name" value="AAA"/>
    <property type="match status" value="1"/>
</dbReference>
<dbReference type="SUPFAM" id="SSF52540">
    <property type="entry name" value="P-loop containing nucleoside triphosphate hydrolases"/>
    <property type="match status" value="1"/>
</dbReference>
<dbReference type="PROSITE" id="PS00211">
    <property type="entry name" value="ABC_TRANSPORTER_1"/>
    <property type="match status" value="1"/>
</dbReference>
<dbReference type="PROSITE" id="PS50893">
    <property type="entry name" value="ABC_TRANSPORTER_2"/>
    <property type="match status" value="1"/>
</dbReference>
<dbReference type="PROSITE" id="PS51246">
    <property type="entry name" value="CBIO"/>
    <property type="match status" value="1"/>
</dbReference>
<organism>
    <name type="scientific">Methanoculleus marisnigri (strain ATCC 35101 / DSM 1498 / JR1)</name>
    <dbReference type="NCBI Taxonomy" id="368407"/>
    <lineage>
        <taxon>Archaea</taxon>
        <taxon>Methanobacteriati</taxon>
        <taxon>Methanobacteriota</taxon>
        <taxon>Stenosarchaea group</taxon>
        <taxon>Methanomicrobia</taxon>
        <taxon>Methanomicrobiales</taxon>
        <taxon>Methanomicrobiaceae</taxon>
        <taxon>Methanoculleus</taxon>
    </lineage>
</organism>
<keyword id="KW-0067">ATP-binding</keyword>
<keyword id="KW-1003">Cell membrane</keyword>
<keyword id="KW-0472">Membrane</keyword>
<keyword id="KW-0547">Nucleotide-binding</keyword>
<keyword id="KW-1278">Translocase</keyword>
<keyword id="KW-0813">Transport</keyword>
<proteinExistence type="inferred from homology"/>
<name>ECFA_METMJ</name>
<reference key="1">
    <citation type="journal article" date="2009" name="Stand. Genomic Sci.">
        <title>Complete genome sequence of Methanoculleus marisnigri Romesser et al. 1981 type strain JR1.</title>
        <authorList>
            <person name="Anderson I.J."/>
            <person name="Sieprawska-Lupa M."/>
            <person name="Lapidus A."/>
            <person name="Nolan M."/>
            <person name="Copeland A."/>
            <person name="Glavina Del Rio T."/>
            <person name="Tice H."/>
            <person name="Dalin E."/>
            <person name="Barry K."/>
            <person name="Saunders E."/>
            <person name="Han C."/>
            <person name="Brettin T."/>
            <person name="Detter J.C."/>
            <person name="Bruce D."/>
            <person name="Mikhailova N."/>
            <person name="Pitluck S."/>
            <person name="Hauser L."/>
            <person name="Land M."/>
            <person name="Lucas S."/>
            <person name="Richardson P."/>
            <person name="Whitman W.B."/>
            <person name="Kyrpides N.C."/>
        </authorList>
    </citation>
    <scope>NUCLEOTIDE SEQUENCE [LARGE SCALE GENOMIC DNA]</scope>
    <source>
        <strain>ATCC 35101 / DSM 1498 / JR1</strain>
    </source>
</reference>
<feature type="chain" id="PRO_0000288019" description="Energy-coupling factor transporter ATP-binding protein EcfA">
    <location>
        <begin position="1"/>
        <end position="277"/>
    </location>
</feature>
<feature type="domain" description="ABC transporter" evidence="1">
    <location>
        <begin position="4"/>
        <end position="238"/>
    </location>
</feature>
<feature type="binding site" evidence="1">
    <location>
        <begin position="37"/>
        <end position="44"/>
    </location>
    <ligand>
        <name>ATP</name>
        <dbReference type="ChEBI" id="CHEBI:30616"/>
    </ligand>
</feature>
<accession>A3CVD3</accession>
<evidence type="ECO:0000255" key="1">
    <source>
        <dbReference type="HAMAP-Rule" id="MF_01710"/>
    </source>
</evidence>
<protein>
    <recommendedName>
        <fullName evidence="1">Energy-coupling factor transporter ATP-binding protein EcfA</fullName>
        <shortName evidence="1">ECF transporter A component EcfA</shortName>
        <ecNumber evidence="1">7.-.-.-</ecNumber>
    </recommendedName>
</protein>
<sequence length="277" mass="30725">MHLLETRDLTHIYRGDVHALEGVNFTAERKSRIAVIGPNGAGKSTLFKHFNGILKPTSGEVLVRGEPITKENVREVRKFVGIVFQNPDDQIFSPTVEQDIAFGPINLGLDEATVAHRVEEALHLLGIEELRERVPHHLSGGEKKRVAIAGILAMEPQVLVLDEPTAGLDPQGVADLVAFVNRLPEEYGMTVVFSTHHLDLVAEMADYIYVMDKGRVVGSGTVEEVFTRPELLTQTRLDVPPIPKLIRSLRENGVAIDMAYTYEDAKKSFLDAYARRA</sequence>
<gene>
    <name evidence="1" type="primary">ecfA</name>
    <name type="synonym">cbiO</name>
    <name type="ordered locus">Memar_1404</name>
</gene>